<sequence length="153" mass="16032">MFTESMLFLLLFLLLGLIAKNNSLIIAVAVVILLKLFHVDGKAMEMIQAKGINWGVTIITVAILIPIATGQIGFKDLIDSFKSAAGWIGLGAGIAVSILAKKGVGYMAVDPQVTVSLVFGTILAVVLFRGIAAGPVIAAGIAYMAMQLVAFIK</sequence>
<feature type="chain" id="PRO_0000388904" description="UPF0756 membrane protein LMOf2365_1590">
    <location>
        <begin position="1"/>
        <end position="153"/>
    </location>
</feature>
<feature type="transmembrane region" description="Helical" evidence="1">
    <location>
        <begin position="6"/>
        <end position="26"/>
    </location>
</feature>
<feature type="transmembrane region" description="Helical" evidence="1">
    <location>
        <begin position="54"/>
        <end position="74"/>
    </location>
</feature>
<feature type="transmembrane region" description="Helical" evidence="1">
    <location>
        <begin position="80"/>
        <end position="100"/>
    </location>
</feature>
<feature type="transmembrane region" description="Helical" evidence="1">
    <location>
        <begin position="117"/>
        <end position="137"/>
    </location>
</feature>
<gene>
    <name type="ordered locus">LMOf2365_1590</name>
</gene>
<accession>Q71Z99</accession>
<dbReference type="EMBL" id="AE017262">
    <property type="protein sequence ID" value="AAT04365.1"/>
    <property type="molecule type" value="Genomic_DNA"/>
</dbReference>
<dbReference type="RefSeq" id="WP_003725694.1">
    <property type="nucleotide sequence ID" value="NC_002973.6"/>
</dbReference>
<dbReference type="KEGG" id="lmf:LMOf2365_1590"/>
<dbReference type="HOGENOM" id="CLU_125889_1_0_9"/>
<dbReference type="GO" id="GO:0005886">
    <property type="term" value="C:plasma membrane"/>
    <property type="evidence" value="ECO:0007669"/>
    <property type="project" value="UniProtKB-SubCell"/>
</dbReference>
<dbReference type="HAMAP" id="MF_01874">
    <property type="entry name" value="UPF0756"/>
    <property type="match status" value="1"/>
</dbReference>
<dbReference type="InterPro" id="IPR007382">
    <property type="entry name" value="UPF0756_TM"/>
</dbReference>
<dbReference type="PANTHER" id="PTHR38452">
    <property type="entry name" value="UPF0756 MEMBRANE PROTEIN YEAL"/>
    <property type="match status" value="1"/>
</dbReference>
<dbReference type="PANTHER" id="PTHR38452:SF1">
    <property type="entry name" value="UPF0756 MEMBRANE PROTEIN YEAL"/>
    <property type="match status" value="1"/>
</dbReference>
<dbReference type="Pfam" id="PF04284">
    <property type="entry name" value="DUF441"/>
    <property type="match status" value="1"/>
</dbReference>
<proteinExistence type="inferred from homology"/>
<protein>
    <recommendedName>
        <fullName evidence="1">UPF0756 membrane protein LMOf2365_1590</fullName>
    </recommendedName>
</protein>
<name>Y1590_LISMF</name>
<comment type="subcellular location">
    <subcellularLocation>
        <location evidence="1">Cell membrane</location>
        <topology evidence="1">Multi-pass membrane protein</topology>
    </subcellularLocation>
</comment>
<comment type="similarity">
    <text evidence="1">Belongs to the UPF0756 family.</text>
</comment>
<keyword id="KW-1003">Cell membrane</keyword>
<keyword id="KW-0472">Membrane</keyword>
<keyword id="KW-0812">Transmembrane</keyword>
<keyword id="KW-1133">Transmembrane helix</keyword>
<reference key="1">
    <citation type="journal article" date="2004" name="Nucleic Acids Res.">
        <title>Whole genome comparisons of serotype 4b and 1/2a strains of the food-borne pathogen Listeria monocytogenes reveal new insights into the core genome components of this species.</title>
        <authorList>
            <person name="Nelson K.E."/>
            <person name="Fouts D.E."/>
            <person name="Mongodin E.F."/>
            <person name="Ravel J."/>
            <person name="DeBoy R.T."/>
            <person name="Kolonay J.F."/>
            <person name="Rasko D.A."/>
            <person name="Angiuoli S.V."/>
            <person name="Gill S.R."/>
            <person name="Paulsen I.T."/>
            <person name="Peterson J.D."/>
            <person name="White O."/>
            <person name="Nelson W.C."/>
            <person name="Nierman W.C."/>
            <person name="Beanan M.J."/>
            <person name="Brinkac L.M."/>
            <person name="Daugherty S.C."/>
            <person name="Dodson R.J."/>
            <person name="Durkin A.S."/>
            <person name="Madupu R."/>
            <person name="Haft D.H."/>
            <person name="Selengut J."/>
            <person name="Van Aken S.E."/>
            <person name="Khouri H.M."/>
            <person name="Fedorova N."/>
            <person name="Forberger H.A."/>
            <person name="Tran B."/>
            <person name="Kathariou S."/>
            <person name="Wonderling L.D."/>
            <person name="Uhlich G.A."/>
            <person name="Bayles D.O."/>
            <person name="Luchansky J.B."/>
            <person name="Fraser C.M."/>
        </authorList>
    </citation>
    <scope>NUCLEOTIDE SEQUENCE [LARGE SCALE GENOMIC DNA]</scope>
    <source>
        <strain>F2365</strain>
    </source>
</reference>
<evidence type="ECO:0000255" key="1">
    <source>
        <dbReference type="HAMAP-Rule" id="MF_01874"/>
    </source>
</evidence>
<organism>
    <name type="scientific">Listeria monocytogenes serotype 4b (strain F2365)</name>
    <dbReference type="NCBI Taxonomy" id="265669"/>
    <lineage>
        <taxon>Bacteria</taxon>
        <taxon>Bacillati</taxon>
        <taxon>Bacillota</taxon>
        <taxon>Bacilli</taxon>
        <taxon>Bacillales</taxon>
        <taxon>Listeriaceae</taxon>
        <taxon>Listeria</taxon>
    </lineage>
</organism>